<gene>
    <name evidence="1" type="primary">rpsD</name>
    <name type="ordered locus">BAB1_0851</name>
</gene>
<proteinExistence type="inferred from homology"/>
<dbReference type="EMBL" id="AM040264">
    <property type="protein sequence ID" value="CAJ10807.1"/>
    <property type="molecule type" value="Genomic_DNA"/>
</dbReference>
<dbReference type="RefSeq" id="WP_002963962.1">
    <property type="nucleotide sequence ID" value="NZ_KN046823.1"/>
</dbReference>
<dbReference type="SMR" id="Q2YNH2"/>
<dbReference type="STRING" id="359391.BAB1_0851"/>
<dbReference type="GeneID" id="93016787"/>
<dbReference type="KEGG" id="bmf:BAB1_0851"/>
<dbReference type="PATRIC" id="fig|359391.11.peg.3160"/>
<dbReference type="HOGENOM" id="CLU_092403_0_0_5"/>
<dbReference type="PhylomeDB" id="Q2YNH2"/>
<dbReference type="Proteomes" id="UP000002719">
    <property type="component" value="Chromosome I"/>
</dbReference>
<dbReference type="GO" id="GO:0015935">
    <property type="term" value="C:small ribosomal subunit"/>
    <property type="evidence" value="ECO:0007669"/>
    <property type="project" value="InterPro"/>
</dbReference>
<dbReference type="GO" id="GO:0019843">
    <property type="term" value="F:rRNA binding"/>
    <property type="evidence" value="ECO:0007669"/>
    <property type="project" value="UniProtKB-UniRule"/>
</dbReference>
<dbReference type="GO" id="GO:0003735">
    <property type="term" value="F:structural constituent of ribosome"/>
    <property type="evidence" value="ECO:0007669"/>
    <property type="project" value="InterPro"/>
</dbReference>
<dbReference type="GO" id="GO:0042274">
    <property type="term" value="P:ribosomal small subunit biogenesis"/>
    <property type="evidence" value="ECO:0007669"/>
    <property type="project" value="TreeGrafter"/>
</dbReference>
<dbReference type="GO" id="GO:0006412">
    <property type="term" value="P:translation"/>
    <property type="evidence" value="ECO:0007669"/>
    <property type="project" value="UniProtKB-UniRule"/>
</dbReference>
<dbReference type="CDD" id="cd00165">
    <property type="entry name" value="S4"/>
    <property type="match status" value="1"/>
</dbReference>
<dbReference type="FunFam" id="3.10.290.10:FF:000001">
    <property type="entry name" value="30S ribosomal protein S4"/>
    <property type="match status" value="1"/>
</dbReference>
<dbReference type="Gene3D" id="1.10.1050.10">
    <property type="entry name" value="Ribosomal Protein S4 Delta 41, Chain A, domain 1"/>
    <property type="match status" value="1"/>
</dbReference>
<dbReference type="Gene3D" id="3.10.290.10">
    <property type="entry name" value="RNA-binding S4 domain"/>
    <property type="match status" value="1"/>
</dbReference>
<dbReference type="HAMAP" id="MF_01306_B">
    <property type="entry name" value="Ribosomal_uS4_B"/>
    <property type="match status" value="1"/>
</dbReference>
<dbReference type="InterPro" id="IPR022801">
    <property type="entry name" value="Ribosomal_uS4"/>
</dbReference>
<dbReference type="InterPro" id="IPR005709">
    <property type="entry name" value="Ribosomal_uS4_bac-type"/>
</dbReference>
<dbReference type="InterPro" id="IPR018079">
    <property type="entry name" value="Ribosomal_uS4_CS"/>
</dbReference>
<dbReference type="InterPro" id="IPR001912">
    <property type="entry name" value="Ribosomal_uS4_N"/>
</dbReference>
<dbReference type="InterPro" id="IPR002942">
    <property type="entry name" value="S4_RNA-bd"/>
</dbReference>
<dbReference type="InterPro" id="IPR036986">
    <property type="entry name" value="S4_RNA-bd_sf"/>
</dbReference>
<dbReference type="NCBIfam" id="NF003717">
    <property type="entry name" value="PRK05327.1"/>
    <property type="match status" value="1"/>
</dbReference>
<dbReference type="NCBIfam" id="TIGR01017">
    <property type="entry name" value="rpsD_bact"/>
    <property type="match status" value="1"/>
</dbReference>
<dbReference type="PANTHER" id="PTHR11831">
    <property type="entry name" value="30S 40S RIBOSOMAL PROTEIN"/>
    <property type="match status" value="1"/>
</dbReference>
<dbReference type="PANTHER" id="PTHR11831:SF4">
    <property type="entry name" value="SMALL RIBOSOMAL SUBUNIT PROTEIN US4M"/>
    <property type="match status" value="1"/>
</dbReference>
<dbReference type="Pfam" id="PF00163">
    <property type="entry name" value="Ribosomal_S4"/>
    <property type="match status" value="1"/>
</dbReference>
<dbReference type="Pfam" id="PF01479">
    <property type="entry name" value="S4"/>
    <property type="match status" value="1"/>
</dbReference>
<dbReference type="SMART" id="SM01390">
    <property type="entry name" value="Ribosomal_S4"/>
    <property type="match status" value="1"/>
</dbReference>
<dbReference type="SMART" id="SM00363">
    <property type="entry name" value="S4"/>
    <property type="match status" value="1"/>
</dbReference>
<dbReference type="SUPFAM" id="SSF55174">
    <property type="entry name" value="Alpha-L RNA-binding motif"/>
    <property type="match status" value="1"/>
</dbReference>
<dbReference type="PROSITE" id="PS00632">
    <property type="entry name" value="RIBOSOMAL_S4"/>
    <property type="match status" value="1"/>
</dbReference>
<dbReference type="PROSITE" id="PS50889">
    <property type="entry name" value="S4"/>
    <property type="match status" value="1"/>
</dbReference>
<accession>Q2YNH2</accession>
<sequence length="205" mass="23566">MSKRESAKHKIDRRLGENIWGRPKSPVNRREYGPGQHGQRRKGKLSDFGVQLRAKQKLKGFYGDISEKQFRKTYEEAARRKGDTGENLIGLLESRLDAVVYRAKFVPTIFAARQFINHGHVNVNGRRVNIQSYRLKVGDVVEVREKSKQLAIVLEAVQLAERDVPDYIDVDHNKMVATYNRVPGLSDVPYAVQMEPNLVVEFYSR</sequence>
<name>RS4_BRUA2</name>
<keyword id="KW-1185">Reference proteome</keyword>
<keyword id="KW-0687">Ribonucleoprotein</keyword>
<keyword id="KW-0689">Ribosomal protein</keyword>
<keyword id="KW-0694">RNA-binding</keyword>
<keyword id="KW-0699">rRNA-binding</keyword>
<reference key="1">
    <citation type="journal article" date="2005" name="Infect. Immun.">
        <title>Whole-genome analyses of speciation events in pathogenic Brucellae.</title>
        <authorList>
            <person name="Chain P.S."/>
            <person name="Comerci D.J."/>
            <person name="Tolmasky M.E."/>
            <person name="Larimer F.W."/>
            <person name="Malfatti S.A."/>
            <person name="Vergez L.M."/>
            <person name="Aguero F."/>
            <person name="Land M.L."/>
            <person name="Ugalde R.A."/>
            <person name="Garcia E."/>
        </authorList>
    </citation>
    <scope>NUCLEOTIDE SEQUENCE [LARGE SCALE GENOMIC DNA]</scope>
    <source>
        <strain>2308</strain>
    </source>
</reference>
<protein>
    <recommendedName>
        <fullName evidence="1">Small ribosomal subunit protein uS4</fullName>
    </recommendedName>
    <alternativeName>
        <fullName evidence="3">30S ribosomal protein S4</fullName>
    </alternativeName>
</protein>
<comment type="function">
    <text evidence="1">One of the primary rRNA binding proteins, it binds directly to 16S rRNA where it nucleates assembly of the body of the 30S subunit.</text>
</comment>
<comment type="function">
    <text evidence="1">With S5 and S12 plays an important role in translational accuracy.</text>
</comment>
<comment type="subunit">
    <text evidence="1">Part of the 30S ribosomal subunit. Contacts protein S5. The interaction surface between S4 and S5 is involved in control of translational fidelity.</text>
</comment>
<comment type="similarity">
    <text evidence="1">Belongs to the universal ribosomal protein uS4 family.</text>
</comment>
<organism>
    <name type="scientific">Brucella abortus (strain 2308)</name>
    <dbReference type="NCBI Taxonomy" id="359391"/>
    <lineage>
        <taxon>Bacteria</taxon>
        <taxon>Pseudomonadati</taxon>
        <taxon>Pseudomonadota</taxon>
        <taxon>Alphaproteobacteria</taxon>
        <taxon>Hyphomicrobiales</taxon>
        <taxon>Brucellaceae</taxon>
        <taxon>Brucella/Ochrobactrum group</taxon>
        <taxon>Brucella</taxon>
    </lineage>
</organism>
<evidence type="ECO:0000255" key="1">
    <source>
        <dbReference type="HAMAP-Rule" id="MF_01306"/>
    </source>
</evidence>
<evidence type="ECO:0000256" key="2">
    <source>
        <dbReference type="SAM" id="MobiDB-lite"/>
    </source>
</evidence>
<evidence type="ECO:0000305" key="3"/>
<feature type="chain" id="PRO_0000228880" description="Small ribosomal subunit protein uS4">
    <location>
        <begin position="1"/>
        <end position="205"/>
    </location>
</feature>
<feature type="domain" description="S4 RNA-binding" evidence="1">
    <location>
        <begin position="94"/>
        <end position="157"/>
    </location>
</feature>
<feature type="region of interest" description="Disordered" evidence="2">
    <location>
        <begin position="1"/>
        <end position="46"/>
    </location>
</feature>
<feature type="compositionally biased region" description="Basic and acidic residues" evidence="2">
    <location>
        <begin position="1"/>
        <end position="16"/>
    </location>
</feature>